<comment type="function">
    <text evidence="1">Together with its co-chaperonin GroES, plays an essential role in assisting protein folding. The GroEL-GroES system forms a nano-cage that allows encapsulation of the non-native substrate proteins and provides a physical environment optimized to promote and accelerate protein folding.</text>
</comment>
<comment type="catalytic activity">
    <reaction evidence="1">
        <text>ATP + H2O + a folded polypeptide = ADP + phosphate + an unfolded polypeptide.</text>
        <dbReference type="EC" id="5.6.1.7"/>
    </reaction>
</comment>
<comment type="subunit">
    <text evidence="1">Forms a cylinder of 14 subunits composed of two heptameric rings stacked back-to-back. Interacts with the co-chaperonin GroES.</text>
</comment>
<comment type="subcellular location">
    <subcellularLocation>
        <location evidence="1">Cytoplasm</location>
    </subcellularLocation>
</comment>
<comment type="similarity">
    <text evidence="1">Belongs to the chaperonin (HSP60) family.</text>
</comment>
<dbReference type="EC" id="5.6.1.7" evidence="1"/>
<dbReference type="EMBL" id="CP000058">
    <property type="protein sequence ID" value="AAZ36265.1"/>
    <property type="molecule type" value="Genomic_DNA"/>
</dbReference>
<dbReference type="RefSeq" id="WP_011169418.1">
    <property type="nucleotide sequence ID" value="NC_005773.3"/>
</dbReference>
<dbReference type="SMR" id="Q48EI5"/>
<dbReference type="KEGG" id="psp:PSPPH_4077"/>
<dbReference type="eggNOG" id="COG0459">
    <property type="taxonomic scope" value="Bacteria"/>
</dbReference>
<dbReference type="HOGENOM" id="CLU_016503_3_0_6"/>
<dbReference type="Proteomes" id="UP000000551">
    <property type="component" value="Chromosome"/>
</dbReference>
<dbReference type="GO" id="GO:0005737">
    <property type="term" value="C:cytoplasm"/>
    <property type="evidence" value="ECO:0007669"/>
    <property type="project" value="UniProtKB-SubCell"/>
</dbReference>
<dbReference type="GO" id="GO:0005524">
    <property type="term" value="F:ATP binding"/>
    <property type="evidence" value="ECO:0007669"/>
    <property type="project" value="UniProtKB-UniRule"/>
</dbReference>
<dbReference type="GO" id="GO:0140662">
    <property type="term" value="F:ATP-dependent protein folding chaperone"/>
    <property type="evidence" value="ECO:0007669"/>
    <property type="project" value="InterPro"/>
</dbReference>
<dbReference type="GO" id="GO:0016853">
    <property type="term" value="F:isomerase activity"/>
    <property type="evidence" value="ECO:0007669"/>
    <property type="project" value="UniProtKB-KW"/>
</dbReference>
<dbReference type="GO" id="GO:0051082">
    <property type="term" value="F:unfolded protein binding"/>
    <property type="evidence" value="ECO:0007669"/>
    <property type="project" value="UniProtKB-UniRule"/>
</dbReference>
<dbReference type="GO" id="GO:0042026">
    <property type="term" value="P:protein refolding"/>
    <property type="evidence" value="ECO:0007669"/>
    <property type="project" value="UniProtKB-UniRule"/>
</dbReference>
<dbReference type="CDD" id="cd03344">
    <property type="entry name" value="GroEL"/>
    <property type="match status" value="1"/>
</dbReference>
<dbReference type="FunFam" id="1.10.560.10:FF:000001">
    <property type="entry name" value="60 kDa chaperonin"/>
    <property type="match status" value="1"/>
</dbReference>
<dbReference type="FunFam" id="3.50.7.10:FF:000001">
    <property type="entry name" value="60 kDa chaperonin"/>
    <property type="match status" value="1"/>
</dbReference>
<dbReference type="Gene3D" id="3.50.7.10">
    <property type="entry name" value="GroEL"/>
    <property type="match status" value="1"/>
</dbReference>
<dbReference type="Gene3D" id="1.10.560.10">
    <property type="entry name" value="GroEL-like equatorial domain"/>
    <property type="match status" value="1"/>
</dbReference>
<dbReference type="Gene3D" id="3.30.260.10">
    <property type="entry name" value="TCP-1-like chaperonin intermediate domain"/>
    <property type="match status" value="1"/>
</dbReference>
<dbReference type="HAMAP" id="MF_00600">
    <property type="entry name" value="CH60"/>
    <property type="match status" value="1"/>
</dbReference>
<dbReference type="InterPro" id="IPR018370">
    <property type="entry name" value="Chaperonin_Cpn60_CS"/>
</dbReference>
<dbReference type="InterPro" id="IPR001844">
    <property type="entry name" value="Cpn60/GroEL"/>
</dbReference>
<dbReference type="InterPro" id="IPR002423">
    <property type="entry name" value="Cpn60/GroEL/TCP-1"/>
</dbReference>
<dbReference type="InterPro" id="IPR027409">
    <property type="entry name" value="GroEL-like_apical_dom_sf"/>
</dbReference>
<dbReference type="InterPro" id="IPR027413">
    <property type="entry name" value="GROEL-like_equatorial_sf"/>
</dbReference>
<dbReference type="InterPro" id="IPR027410">
    <property type="entry name" value="TCP-1-like_intermed_sf"/>
</dbReference>
<dbReference type="NCBIfam" id="TIGR02348">
    <property type="entry name" value="GroEL"/>
    <property type="match status" value="1"/>
</dbReference>
<dbReference type="NCBIfam" id="NF000592">
    <property type="entry name" value="PRK00013.1"/>
    <property type="match status" value="1"/>
</dbReference>
<dbReference type="NCBIfam" id="NF009487">
    <property type="entry name" value="PRK12849.1"/>
    <property type="match status" value="1"/>
</dbReference>
<dbReference type="NCBIfam" id="NF009488">
    <property type="entry name" value="PRK12850.1"/>
    <property type="match status" value="1"/>
</dbReference>
<dbReference type="NCBIfam" id="NF009489">
    <property type="entry name" value="PRK12851.1"/>
    <property type="match status" value="1"/>
</dbReference>
<dbReference type="PANTHER" id="PTHR45633">
    <property type="entry name" value="60 KDA HEAT SHOCK PROTEIN, MITOCHONDRIAL"/>
    <property type="match status" value="1"/>
</dbReference>
<dbReference type="Pfam" id="PF00118">
    <property type="entry name" value="Cpn60_TCP1"/>
    <property type="match status" value="1"/>
</dbReference>
<dbReference type="PRINTS" id="PR00298">
    <property type="entry name" value="CHAPERONIN60"/>
</dbReference>
<dbReference type="SUPFAM" id="SSF52029">
    <property type="entry name" value="GroEL apical domain-like"/>
    <property type="match status" value="1"/>
</dbReference>
<dbReference type="SUPFAM" id="SSF48592">
    <property type="entry name" value="GroEL equatorial domain-like"/>
    <property type="match status" value="1"/>
</dbReference>
<dbReference type="SUPFAM" id="SSF54849">
    <property type="entry name" value="GroEL-intermediate domain like"/>
    <property type="match status" value="1"/>
</dbReference>
<dbReference type="PROSITE" id="PS00296">
    <property type="entry name" value="CHAPERONINS_CPN60"/>
    <property type="match status" value="1"/>
</dbReference>
<feature type="chain" id="PRO_0000256952" description="Chaperonin GroEL">
    <location>
        <begin position="1"/>
        <end position="547"/>
    </location>
</feature>
<feature type="binding site" evidence="1">
    <location>
        <begin position="30"/>
        <end position="33"/>
    </location>
    <ligand>
        <name>ATP</name>
        <dbReference type="ChEBI" id="CHEBI:30616"/>
    </ligand>
</feature>
<feature type="binding site" evidence="1">
    <location>
        <position position="51"/>
    </location>
    <ligand>
        <name>ATP</name>
        <dbReference type="ChEBI" id="CHEBI:30616"/>
    </ligand>
</feature>
<feature type="binding site" evidence="1">
    <location>
        <begin position="87"/>
        <end position="91"/>
    </location>
    <ligand>
        <name>ATP</name>
        <dbReference type="ChEBI" id="CHEBI:30616"/>
    </ligand>
</feature>
<feature type="binding site" evidence="1">
    <location>
        <position position="415"/>
    </location>
    <ligand>
        <name>ATP</name>
        <dbReference type="ChEBI" id="CHEBI:30616"/>
    </ligand>
</feature>
<feature type="binding site" evidence="1">
    <location>
        <begin position="479"/>
        <end position="481"/>
    </location>
    <ligand>
        <name>ATP</name>
        <dbReference type="ChEBI" id="CHEBI:30616"/>
    </ligand>
</feature>
<feature type="binding site" evidence="1">
    <location>
        <position position="495"/>
    </location>
    <ligand>
        <name>ATP</name>
        <dbReference type="ChEBI" id="CHEBI:30616"/>
    </ligand>
</feature>
<proteinExistence type="inferred from homology"/>
<sequence>MAAKEVKFGDSGRKKMLAGVNVLADAVKATLGPKGRNVIIEKSFGAPLITKDGVSVAKEIELKDRFENMGAQLVKDVASRANDDAGDGTTTATVLAQAIVNEGLKAVAAGMNPMDLKRGIDKATIAIVAELKKLSKPCTDTKAIAQVGTISANSDHSIGDIIAEAMEKVTKDGVITVEEGSGLENELSVVEGMQFDRGYLSPYFINKPDTMVAELDSPLLLLVDKKISNIREMLPVLEAVAKAGRPLLIVAEDVEGEALATLVVNNMRGIVKVAAVKAPGFGDRRKAMLQDIAVLTGGTVISEEVGLSLETTTLEHLGNAKRVILNKENTTIIDGAGVKTDIDSRISQIRQQIGDTSSDYDKEKLQERLAKLSGGVAVIKVGAGSEVEMKEKKARVEDALHATRAAVEEGVVPGGGVALVRSLQAIEGLKGDNADQDVGIALLRRAVEAPLRQIVANSGDEPSVVVDKVKQGSGNFGYNAASGEYGDMIEMGILDPAKVTRSALQAASSIASLMITTEAMIADVPEDKPAGGGMPDMGGMGGMGGMM</sequence>
<gene>
    <name evidence="1" type="primary">groEL</name>
    <name evidence="1" type="synonym">groL</name>
    <name type="ordered locus">PSPPH_4077</name>
</gene>
<name>CH60_PSE14</name>
<keyword id="KW-0067">ATP-binding</keyword>
<keyword id="KW-0143">Chaperone</keyword>
<keyword id="KW-0963">Cytoplasm</keyword>
<keyword id="KW-0413">Isomerase</keyword>
<keyword id="KW-0547">Nucleotide-binding</keyword>
<reference key="1">
    <citation type="journal article" date="2005" name="J. Bacteriol.">
        <title>Whole-genome sequence analysis of Pseudomonas syringae pv. phaseolicola 1448A reveals divergence among pathovars in genes involved in virulence and transposition.</title>
        <authorList>
            <person name="Joardar V."/>
            <person name="Lindeberg M."/>
            <person name="Jackson R.W."/>
            <person name="Selengut J."/>
            <person name="Dodson R."/>
            <person name="Brinkac L.M."/>
            <person name="Daugherty S.C."/>
            <person name="DeBoy R.T."/>
            <person name="Durkin A.S."/>
            <person name="Gwinn Giglio M."/>
            <person name="Madupu R."/>
            <person name="Nelson W.C."/>
            <person name="Rosovitz M.J."/>
            <person name="Sullivan S.A."/>
            <person name="Crabtree J."/>
            <person name="Creasy T."/>
            <person name="Davidsen T.M."/>
            <person name="Haft D.H."/>
            <person name="Zafar N."/>
            <person name="Zhou L."/>
            <person name="Halpin R."/>
            <person name="Holley T."/>
            <person name="Khouri H.M."/>
            <person name="Feldblyum T.V."/>
            <person name="White O."/>
            <person name="Fraser C.M."/>
            <person name="Chatterjee A.K."/>
            <person name="Cartinhour S."/>
            <person name="Schneider D."/>
            <person name="Mansfield J.W."/>
            <person name="Collmer A."/>
            <person name="Buell R."/>
        </authorList>
    </citation>
    <scope>NUCLEOTIDE SEQUENCE [LARGE SCALE GENOMIC DNA]</scope>
    <source>
        <strain>1448A / Race 6</strain>
    </source>
</reference>
<evidence type="ECO:0000255" key="1">
    <source>
        <dbReference type="HAMAP-Rule" id="MF_00600"/>
    </source>
</evidence>
<protein>
    <recommendedName>
        <fullName evidence="1">Chaperonin GroEL</fullName>
        <ecNumber evidence="1">5.6.1.7</ecNumber>
    </recommendedName>
    <alternativeName>
        <fullName evidence="1">60 kDa chaperonin</fullName>
    </alternativeName>
    <alternativeName>
        <fullName evidence="1">Chaperonin-60</fullName>
        <shortName evidence="1">Cpn60</shortName>
    </alternativeName>
</protein>
<organism>
    <name type="scientific">Pseudomonas savastanoi pv. phaseolicola (strain 1448A / Race 6)</name>
    <name type="common">Pseudomonas syringae pv. phaseolicola (strain 1448A / Race 6)</name>
    <dbReference type="NCBI Taxonomy" id="264730"/>
    <lineage>
        <taxon>Bacteria</taxon>
        <taxon>Pseudomonadati</taxon>
        <taxon>Pseudomonadota</taxon>
        <taxon>Gammaproteobacteria</taxon>
        <taxon>Pseudomonadales</taxon>
        <taxon>Pseudomonadaceae</taxon>
        <taxon>Pseudomonas</taxon>
    </lineage>
</organism>
<accession>Q48EI5</accession>